<sequence>MLDLKRIRNNSNEIKESLNNRGEKFDVTVIDEVLKLDEERRNILVKVEVLKSKRNQVSSEVPKLKKEGKDVSNIVAEMKNLSEEIKGFDTTLAKIDEKIQYIMLRIPNIPNPQVPDGDTDEDNIEIRNWSEPTKFDFEPKAHWDIGSNLNILDFERAGKVTGSRFTFYKGLGARLERSLISYFLDTHTEKHGYTEILPPYMVNRTSMIGTGQLPKFEEDAFKISEDDYFLIPTAEVPVTNLYRDEILKGDELPLKHVAYSACFRSEAGSAGRDTRGLVRQHQFNKVELVKFTKPEQSYEELEKLTNDAETVLKELGIPYRVVRICKGDLGFTAALKYDLEVWMPSYNRYVEISSCSNFEDFQARRANIRYKEDAKAKPQYVHTLNGSGVAIGRTVAAILENYQNEDGSVTIPEVLRPYMGGKEAIK</sequence>
<protein>
    <recommendedName>
        <fullName evidence="1">Serine--tRNA ligase</fullName>
        <ecNumber evidence="1">6.1.1.11</ecNumber>
    </recommendedName>
    <alternativeName>
        <fullName evidence="1">Seryl-tRNA synthetase</fullName>
        <shortName evidence="1">SerRS</shortName>
    </alternativeName>
    <alternativeName>
        <fullName evidence="1">Seryl-tRNA(Ser/Sec) synthetase</fullName>
    </alternativeName>
</protein>
<reference key="1">
    <citation type="journal article" date="2007" name="Genome Res.">
        <title>Genome sequence of a proteolytic (Group I) Clostridium botulinum strain Hall A and comparative analysis of the clostridial genomes.</title>
        <authorList>
            <person name="Sebaihia M."/>
            <person name="Peck M.W."/>
            <person name="Minton N.P."/>
            <person name="Thomson N.R."/>
            <person name="Holden M.T.G."/>
            <person name="Mitchell W.J."/>
            <person name="Carter A.T."/>
            <person name="Bentley S.D."/>
            <person name="Mason D.R."/>
            <person name="Crossman L."/>
            <person name="Paul C.J."/>
            <person name="Ivens A."/>
            <person name="Wells-Bennik M.H.J."/>
            <person name="Davis I.J."/>
            <person name="Cerdeno-Tarraga A.M."/>
            <person name="Churcher C."/>
            <person name="Quail M.A."/>
            <person name="Chillingworth T."/>
            <person name="Feltwell T."/>
            <person name="Fraser A."/>
            <person name="Goodhead I."/>
            <person name="Hance Z."/>
            <person name="Jagels K."/>
            <person name="Larke N."/>
            <person name="Maddison M."/>
            <person name="Moule S."/>
            <person name="Mungall K."/>
            <person name="Norbertczak H."/>
            <person name="Rabbinowitsch E."/>
            <person name="Sanders M."/>
            <person name="Simmonds M."/>
            <person name="White B."/>
            <person name="Whithead S."/>
            <person name="Parkhill J."/>
        </authorList>
    </citation>
    <scope>NUCLEOTIDE SEQUENCE [LARGE SCALE GENOMIC DNA]</scope>
    <source>
        <strain>Hall / ATCC 3502 / NCTC 13319 / Type A</strain>
    </source>
</reference>
<reference key="2">
    <citation type="journal article" date="2007" name="PLoS ONE">
        <title>Analysis of the neurotoxin complex genes in Clostridium botulinum A1-A4 and B1 strains: BoNT/A3, /Ba4 and /B1 clusters are located within plasmids.</title>
        <authorList>
            <person name="Smith T.J."/>
            <person name="Hill K.K."/>
            <person name="Foley B.T."/>
            <person name="Detter J.C."/>
            <person name="Munk A.C."/>
            <person name="Bruce D.C."/>
            <person name="Doggett N.A."/>
            <person name="Smith L.A."/>
            <person name="Marks J.D."/>
            <person name="Xie G."/>
            <person name="Brettin T.S."/>
        </authorList>
    </citation>
    <scope>NUCLEOTIDE SEQUENCE [LARGE SCALE GENOMIC DNA]</scope>
    <source>
        <strain>Hall / ATCC 3502 / NCTC 13319 / Type A</strain>
    </source>
</reference>
<dbReference type="EC" id="6.1.1.11" evidence="1"/>
<dbReference type="EMBL" id="CP000727">
    <property type="protein sequence ID" value="ABS38666.1"/>
    <property type="molecule type" value="Genomic_DNA"/>
</dbReference>
<dbReference type="EMBL" id="AM412317">
    <property type="protein sequence ID" value="CAL81569.1"/>
    <property type="molecule type" value="Genomic_DNA"/>
</dbReference>
<dbReference type="RefSeq" id="WP_011947906.1">
    <property type="nucleotide sequence ID" value="NC_009698.1"/>
</dbReference>
<dbReference type="RefSeq" id="YP_001252567.1">
    <property type="nucleotide sequence ID" value="NC_009495.1"/>
</dbReference>
<dbReference type="RefSeq" id="YP_001385977.1">
    <property type="nucleotide sequence ID" value="NC_009698.1"/>
</dbReference>
<dbReference type="SMR" id="A5HXR1"/>
<dbReference type="GeneID" id="5184271"/>
<dbReference type="KEGG" id="cbh:CLC_0024"/>
<dbReference type="KEGG" id="cbo:CBO0016"/>
<dbReference type="PATRIC" id="fig|413999.7.peg.15"/>
<dbReference type="HOGENOM" id="CLU_023797_1_1_9"/>
<dbReference type="UniPathway" id="UPA00906">
    <property type="reaction ID" value="UER00895"/>
</dbReference>
<dbReference type="PRO" id="PR:A5HXR1"/>
<dbReference type="Proteomes" id="UP000001986">
    <property type="component" value="Chromosome"/>
</dbReference>
<dbReference type="GO" id="GO:0005737">
    <property type="term" value="C:cytoplasm"/>
    <property type="evidence" value="ECO:0007669"/>
    <property type="project" value="UniProtKB-SubCell"/>
</dbReference>
<dbReference type="GO" id="GO:0005524">
    <property type="term" value="F:ATP binding"/>
    <property type="evidence" value="ECO:0007669"/>
    <property type="project" value="UniProtKB-UniRule"/>
</dbReference>
<dbReference type="GO" id="GO:0140096">
    <property type="term" value="F:catalytic activity, acting on a protein"/>
    <property type="evidence" value="ECO:0007669"/>
    <property type="project" value="UniProtKB-ARBA"/>
</dbReference>
<dbReference type="GO" id="GO:0004828">
    <property type="term" value="F:serine-tRNA ligase activity"/>
    <property type="evidence" value="ECO:0007669"/>
    <property type="project" value="UniProtKB-UniRule"/>
</dbReference>
<dbReference type="GO" id="GO:0016740">
    <property type="term" value="F:transferase activity"/>
    <property type="evidence" value="ECO:0007669"/>
    <property type="project" value="UniProtKB-ARBA"/>
</dbReference>
<dbReference type="GO" id="GO:0016260">
    <property type="term" value="P:selenocysteine biosynthetic process"/>
    <property type="evidence" value="ECO:0007669"/>
    <property type="project" value="UniProtKB-UniRule"/>
</dbReference>
<dbReference type="GO" id="GO:0006434">
    <property type="term" value="P:seryl-tRNA aminoacylation"/>
    <property type="evidence" value="ECO:0007669"/>
    <property type="project" value="UniProtKB-UniRule"/>
</dbReference>
<dbReference type="CDD" id="cd00770">
    <property type="entry name" value="SerRS_core"/>
    <property type="match status" value="1"/>
</dbReference>
<dbReference type="Gene3D" id="3.30.930.10">
    <property type="entry name" value="Bira Bifunctional Protein, Domain 2"/>
    <property type="match status" value="1"/>
</dbReference>
<dbReference type="Gene3D" id="1.10.287.40">
    <property type="entry name" value="Serine-tRNA synthetase, tRNA binding domain"/>
    <property type="match status" value="1"/>
</dbReference>
<dbReference type="HAMAP" id="MF_00176">
    <property type="entry name" value="Ser_tRNA_synth_type1"/>
    <property type="match status" value="1"/>
</dbReference>
<dbReference type="InterPro" id="IPR002314">
    <property type="entry name" value="aa-tRNA-synt_IIb"/>
</dbReference>
<dbReference type="InterPro" id="IPR006195">
    <property type="entry name" value="aa-tRNA-synth_II"/>
</dbReference>
<dbReference type="InterPro" id="IPR045864">
    <property type="entry name" value="aa-tRNA-synth_II/BPL/LPL"/>
</dbReference>
<dbReference type="InterPro" id="IPR002317">
    <property type="entry name" value="Ser-tRNA-ligase_type_1"/>
</dbReference>
<dbReference type="InterPro" id="IPR015866">
    <property type="entry name" value="Ser-tRNA-synth_1_N"/>
</dbReference>
<dbReference type="InterPro" id="IPR042103">
    <property type="entry name" value="SerRS_1_N_sf"/>
</dbReference>
<dbReference type="InterPro" id="IPR033729">
    <property type="entry name" value="SerRS_core"/>
</dbReference>
<dbReference type="InterPro" id="IPR010978">
    <property type="entry name" value="tRNA-bd_arm"/>
</dbReference>
<dbReference type="NCBIfam" id="TIGR00414">
    <property type="entry name" value="serS"/>
    <property type="match status" value="1"/>
</dbReference>
<dbReference type="PANTHER" id="PTHR43697:SF1">
    <property type="entry name" value="SERINE--TRNA LIGASE"/>
    <property type="match status" value="1"/>
</dbReference>
<dbReference type="PANTHER" id="PTHR43697">
    <property type="entry name" value="SERYL-TRNA SYNTHETASE"/>
    <property type="match status" value="1"/>
</dbReference>
<dbReference type="Pfam" id="PF02403">
    <property type="entry name" value="Seryl_tRNA_N"/>
    <property type="match status" value="1"/>
</dbReference>
<dbReference type="Pfam" id="PF00587">
    <property type="entry name" value="tRNA-synt_2b"/>
    <property type="match status" value="1"/>
</dbReference>
<dbReference type="PIRSF" id="PIRSF001529">
    <property type="entry name" value="Ser-tRNA-synth_IIa"/>
    <property type="match status" value="1"/>
</dbReference>
<dbReference type="PRINTS" id="PR00981">
    <property type="entry name" value="TRNASYNTHSER"/>
</dbReference>
<dbReference type="SUPFAM" id="SSF55681">
    <property type="entry name" value="Class II aaRS and biotin synthetases"/>
    <property type="match status" value="1"/>
</dbReference>
<dbReference type="SUPFAM" id="SSF46589">
    <property type="entry name" value="tRNA-binding arm"/>
    <property type="match status" value="1"/>
</dbReference>
<dbReference type="PROSITE" id="PS50862">
    <property type="entry name" value="AA_TRNA_LIGASE_II"/>
    <property type="match status" value="1"/>
</dbReference>
<evidence type="ECO:0000255" key="1">
    <source>
        <dbReference type="HAMAP-Rule" id="MF_00176"/>
    </source>
</evidence>
<feature type="chain" id="PRO_1000019657" description="Serine--tRNA ligase">
    <location>
        <begin position="1"/>
        <end position="426"/>
    </location>
</feature>
<feature type="binding site" evidence="1">
    <location>
        <begin position="233"/>
        <end position="235"/>
    </location>
    <ligand>
        <name>L-serine</name>
        <dbReference type="ChEBI" id="CHEBI:33384"/>
    </ligand>
</feature>
<feature type="binding site" evidence="1">
    <location>
        <begin position="264"/>
        <end position="266"/>
    </location>
    <ligand>
        <name>ATP</name>
        <dbReference type="ChEBI" id="CHEBI:30616"/>
    </ligand>
</feature>
<feature type="binding site" evidence="1">
    <location>
        <position position="287"/>
    </location>
    <ligand>
        <name>L-serine</name>
        <dbReference type="ChEBI" id="CHEBI:33384"/>
    </ligand>
</feature>
<feature type="binding site" evidence="1">
    <location>
        <begin position="351"/>
        <end position="354"/>
    </location>
    <ligand>
        <name>ATP</name>
        <dbReference type="ChEBI" id="CHEBI:30616"/>
    </ligand>
</feature>
<feature type="binding site" evidence="1">
    <location>
        <position position="387"/>
    </location>
    <ligand>
        <name>L-serine</name>
        <dbReference type="ChEBI" id="CHEBI:33384"/>
    </ligand>
</feature>
<proteinExistence type="inferred from homology"/>
<accession>A5HXR1</accession>
<accession>A7FZU1</accession>
<keyword id="KW-0030">Aminoacyl-tRNA synthetase</keyword>
<keyword id="KW-0067">ATP-binding</keyword>
<keyword id="KW-0963">Cytoplasm</keyword>
<keyword id="KW-0436">Ligase</keyword>
<keyword id="KW-0547">Nucleotide-binding</keyword>
<keyword id="KW-0648">Protein biosynthesis</keyword>
<keyword id="KW-1185">Reference proteome</keyword>
<gene>
    <name evidence="1" type="primary">serS</name>
    <name type="ordered locus">CBO0016</name>
    <name type="ordered locus">CLC_0024</name>
</gene>
<organism>
    <name type="scientific">Clostridium botulinum (strain Hall / ATCC 3502 / NCTC 13319 / Type A)</name>
    <dbReference type="NCBI Taxonomy" id="441771"/>
    <lineage>
        <taxon>Bacteria</taxon>
        <taxon>Bacillati</taxon>
        <taxon>Bacillota</taxon>
        <taxon>Clostridia</taxon>
        <taxon>Eubacteriales</taxon>
        <taxon>Clostridiaceae</taxon>
        <taxon>Clostridium</taxon>
    </lineage>
</organism>
<comment type="function">
    <text evidence="1">Catalyzes the attachment of serine to tRNA(Ser). Is also able to aminoacylate tRNA(Sec) with serine, to form the misacylated tRNA L-seryl-tRNA(Sec), which will be further converted into selenocysteinyl-tRNA(Sec).</text>
</comment>
<comment type="catalytic activity">
    <reaction evidence="1">
        <text>tRNA(Ser) + L-serine + ATP = L-seryl-tRNA(Ser) + AMP + diphosphate + H(+)</text>
        <dbReference type="Rhea" id="RHEA:12292"/>
        <dbReference type="Rhea" id="RHEA-COMP:9669"/>
        <dbReference type="Rhea" id="RHEA-COMP:9703"/>
        <dbReference type="ChEBI" id="CHEBI:15378"/>
        <dbReference type="ChEBI" id="CHEBI:30616"/>
        <dbReference type="ChEBI" id="CHEBI:33019"/>
        <dbReference type="ChEBI" id="CHEBI:33384"/>
        <dbReference type="ChEBI" id="CHEBI:78442"/>
        <dbReference type="ChEBI" id="CHEBI:78533"/>
        <dbReference type="ChEBI" id="CHEBI:456215"/>
        <dbReference type="EC" id="6.1.1.11"/>
    </reaction>
</comment>
<comment type="catalytic activity">
    <reaction evidence="1">
        <text>tRNA(Sec) + L-serine + ATP = L-seryl-tRNA(Sec) + AMP + diphosphate + H(+)</text>
        <dbReference type="Rhea" id="RHEA:42580"/>
        <dbReference type="Rhea" id="RHEA-COMP:9742"/>
        <dbReference type="Rhea" id="RHEA-COMP:10128"/>
        <dbReference type="ChEBI" id="CHEBI:15378"/>
        <dbReference type="ChEBI" id="CHEBI:30616"/>
        <dbReference type="ChEBI" id="CHEBI:33019"/>
        <dbReference type="ChEBI" id="CHEBI:33384"/>
        <dbReference type="ChEBI" id="CHEBI:78442"/>
        <dbReference type="ChEBI" id="CHEBI:78533"/>
        <dbReference type="ChEBI" id="CHEBI:456215"/>
        <dbReference type="EC" id="6.1.1.11"/>
    </reaction>
</comment>
<comment type="pathway">
    <text evidence="1">Aminoacyl-tRNA biosynthesis; selenocysteinyl-tRNA(Sec) biosynthesis; L-seryl-tRNA(Sec) from L-serine and tRNA(Sec): step 1/1.</text>
</comment>
<comment type="subunit">
    <text evidence="1">Homodimer. The tRNA molecule binds across the dimer.</text>
</comment>
<comment type="subcellular location">
    <subcellularLocation>
        <location evidence="1">Cytoplasm</location>
    </subcellularLocation>
</comment>
<comment type="domain">
    <text evidence="1">Consists of two distinct domains, a catalytic core and a N-terminal extension that is involved in tRNA binding.</text>
</comment>
<comment type="similarity">
    <text evidence="1">Belongs to the class-II aminoacyl-tRNA synthetase family. Type-1 seryl-tRNA synthetase subfamily.</text>
</comment>
<name>SYS_CLOBH</name>